<dbReference type="EMBL" id="AF218575">
    <property type="protein sequence ID" value="AAF91228.1"/>
    <property type="molecule type" value="mRNA"/>
</dbReference>
<dbReference type="EMBL" id="BC085700">
    <property type="protein sequence ID" value="AAH85700.1"/>
    <property type="molecule type" value="mRNA"/>
</dbReference>
<dbReference type="RefSeq" id="NP_620228.1">
    <property type="nucleotide sequence ID" value="NM_138873.2"/>
</dbReference>
<dbReference type="FunCoup" id="Q9JIL9">
    <property type="interactions" value="2211"/>
</dbReference>
<dbReference type="STRING" id="10116.ENSRNOP00000012377"/>
<dbReference type="iPTMnet" id="Q9JIL9"/>
<dbReference type="PhosphoSitePlus" id="Q9JIL9"/>
<dbReference type="PaxDb" id="10116-ENSRNOP00000012377"/>
<dbReference type="GeneID" id="85482"/>
<dbReference type="KEGG" id="rno:85482"/>
<dbReference type="UCSC" id="RGD:621420">
    <property type="organism name" value="rat"/>
</dbReference>
<dbReference type="AGR" id="RGD:621420"/>
<dbReference type="CTD" id="4683"/>
<dbReference type="RGD" id="621420">
    <property type="gene designation" value="Nbn"/>
</dbReference>
<dbReference type="eggNOG" id="ENOG502QQ7Y">
    <property type="taxonomic scope" value="Eukaryota"/>
</dbReference>
<dbReference type="InParanoid" id="Q9JIL9"/>
<dbReference type="PhylomeDB" id="Q9JIL9"/>
<dbReference type="Reactome" id="R-RNO-2559586">
    <property type="pathway name" value="DNA Damage/Telomere Stress Induced Senescence"/>
</dbReference>
<dbReference type="Reactome" id="R-RNO-5685938">
    <property type="pathway name" value="HDR through Single Strand Annealing (SSA)"/>
</dbReference>
<dbReference type="Reactome" id="R-RNO-5685939">
    <property type="pathway name" value="HDR through MMEJ (alt-NHEJ)"/>
</dbReference>
<dbReference type="Reactome" id="R-RNO-5685942">
    <property type="pathway name" value="HDR through Homologous Recombination (HRR)"/>
</dbReference>
<dbReference type="Reactome" id="R-RNO-5693548">
    <property type="pathway name" value="Sensing of DNA Double Strand Breaks"/>
</dbReference>
<dbReference type="Reactome" id="R-RNO-5693565">
    <property type="pathway name" value="Recruitment and ATM-mediated phosphorylation of repair and signaling proteins at DNA double strand breaks"/>
</dbReference>
<dbReference type="Reactome" id="R-RNO-5693568">
    <property type="pathway name" value="Resolution of D-loop Structures through Holliday Junction Intermediates"/>
</dbReference>
<dbReference type="Reactome" id="R-RNO-5693571">
    <property type="pathway name" value="Nonhomologous End-Joining (NHEJ)"/>
</dbReference>
<dbReference type="Reactome" id="R-RNO-5693579">
    <property type="pathway name" value="Homologous DNA Pairing and Strand Exchange"/>
</dbReference>
<dbReference type="Reactome" id="R-RNO-5693607">
    <property type="pathway name" value="Processing of DNA double-strand break ends"/>
</dbReference>
<dbReference type="Reactome" id="R-RNO-5693616">
    <property type="pathway name" value="Presynaptic phase of homologous DNA pairing and strand exchange"/>
</dbReference>
<dbReference type="Reactome" id="R-RNO-6804756">
    <property type="pathway name" value="Regulation of TP53 Activity through Phosphorylation"/>
</dbReference>
<dbReference type="Reactome" id="R-RNO-69473">
    <property type="pathway name" value="G2/M DNA damage checkpoint"/>
</dbReference>
<dbReference type="PRO" id="PR:Q9JIL9"/>
<dbReference type="Proteomes" id="UP000002494">
    <property type="component" value="Unplaced"/>
</dbReference>
<dbReference type="GO" id="GO:0070533">
    <property type="term" value="C:BRCA1-C complex"/>
    <property type="evidence" value="ECO:0000266"/>
    <property type="project" value="RGD"/>
</dbReference>
<dbReference type="GO" id="GO:0000781">
    <property type="term" value="C:chromosome, telomeric region"/>
    <property type="evidence" value="ECO:0000250"/>
    <property type="project" value="UniProtKB"/>
</dbReference>
<dbReference type="GO" id="GO:0030870">
    <property type="term" value="C:Mre11 complex"/>
    <property type="evidence" value="ECO:0000250"/>
    <property type="project" value="UniProtKB"/>
</dbReference>
<dbReference type="GO" id="GO:0042405">
    <property type="term" value="C:nuclear inclusion body"/>
    <property type="evidence" value="ECO:0000250"/>
    <property type="project" value="UniProtKB"/>
</dbReference>
<dbReference type="GO" id="GO:0005730">
    <property type="term" value="C:nucleolus"/>
    <property type="evidence" value="ECO:0000266"/>
    <property type="project" value="RGD"/>
</dbReference>
<dbReference type="GO" id="GO:0005634">
    <property type="term" value="C:nucleus"/>
    <property type="evidence" value="ECO:0000266"/>
    <property type="project" value="RGD"/>
</dbReference>
<dbReference type="GO" id="GO:0016605">
    <property type="term" value="C:PML body"/>
    <property type="evidence" value="ECO:0000266"/>
    <property type="project" value="RGD"/>
</dbReference>
<dbReference type="GO" id="GO:0005657">
    <property type="term" value="C:replication fork"/>
    <property type="evidence" value="ECO:0000266"/>
    <property type="project" value="RGD"/>
</dbReference>
<dbReference type="GO" id="GO:0035861">
    <property type="term" value="C:site of double-strand break"/>
    <property type="evidence" value="ECO:0000250"/>
    <property type="project" value="UniProtKB"/>
</dbReference>
<dbReference type="GO" id="GO:0140463">
    <property type="term" value="F:chromatin-protein adaptor activity"/>
    <property type="evidence" value="ECO:0000250"/>
    <property type="project" value="UniProtKB"/>
</dbReference>
<dbReference type="GO" id="GO:0003684">
    <property type="term" value="F:damaged DNA binding"/>
    <property type="evidence" value="ECO:0000266"/>
    <property type="project" value="RGD"/>
</dbReference>
<dbReference type="GO" id="GO:0140297">
    <property type="term" value="F:DNA-binding transcription factor binding"/>
    <property type="evidence" value="ECO:0000250"/>
    <property type="project" value="UniProtKB"/>
</dbReference>
<dbReference type="GO" id="GO:0042393">
    <property type="term" value="F:histone binding"/>
    <property type="evidence" value="ECO:0000266"/>
    <property type="project" value="RGD"/>
</dbReference>
<dbReference type="GO" id="GO:0140031">
    <property type="term" value="F:phosphorylation-dependent protein binding"/>
    <property type="evidence" value="ECO:0000250"/>
    <property type="project" value="UniProtKB"/>
</dbReference>
<dbReference type="GO" id="GO:0043539">
    <property type="term" value="F:protein serine/threonine kinase activator activity"/>
    <property type="evidence" value="ECO:0000250"/>
    <property type="project" value="UniProtKB"/>
</dbReference>
<dbReference type="GO" id="GO:0001832">
    <property type="term" value="P:blastocyst growth"/>
    <property type="evidence" value="ECO:0000250"/>
    <property type="project" value="UniProtKB"/>
</dbReference>
<dbReference type="GO" id="GO:0000077">
    <property type="term" value="P:DNA damage checkpoint signaling"/>
    <property type="evidence" value="ECO:0000266"/>
    <property type="project" value="RGD"/>
</dbReference>
<dbReference type="GO" id="GO:0000729">
    <property type="term" value="P:DNA double-strand break processing"/>
    <property type="evidence" value="ECO:0000250"/>
    <property type="project" value="UniProtKB"/>
</dbReference>
<dbReference type="GO" id="GO:0110025">
    <property type="term" value="P:DNA strand resection involved in replication fork processing"/>
    <property type="evidence" value="ECO:0000266"/>
    <property type="project" value="RGD"/>
</dbReference>
<dbReference type="GO" id="GO:0006302">
    <property type="term" value="P:double-strand break repair"/>
    <property type="evidence" value="ECO:0000250"/>
    <property type="project" value="UniProtKB"/>
</dbReference>
<dbReference type="GO" id="GO:0097681">
    <property type="term" value="P:double-strand break repair via alternative nonhomologous end joining"/>
    <property type="evidence" value="ECO:0000266"/>
    <property type="project" value="RGD"/>
</dbReference>
<dbReference type="GO" id="GO:0000724">
    <property type="term" value="P:double-strand break repair via homologous recombination"/>
    <property type="evidence" value="ECO:0000266"/>
    <property type="project" value="RGD"/>
</dbReference>
<dbReference type="GO" id="GO:0046597">
    <property type="term" value="P:host-mediated suppression of symbiont invasion"/>
    <property type="evidence" value="ECO:0000315"/>
    <property type="project" value="RGD"/>
</dbReference>
<dbReference type="GO" id="GO:0001701">
    <property type="term" value="P:in utero embryonic development"/>
    <property type="evidence" value="ECO:0000250"/>
    <property type="project" value="UniProtKB"/>
</dbReference>
<dbReference type="GO" id="GO:0097193">
    <property type="term" value="P:intrinsic apoptotic signaling pathway"/>
    <property type="evidence" value="ECO:0000266"/>
    <property type="project" value="RGD"/>
</dbReference>
<dbReference type="GO" id="GO:0045190">
    <property type="term" value="P:isotype switching"/>
    <property type="evidence" value="ECO:0000250"/>
    <property type="project" value="UniProtKB"/>
</dbReference>
<dbReference type="GO" id="GO:0051321">
    <property type="term" value="P:meiotic cell cycle"/>
    <property type="evidence" value="ECO:0007669"/>
    <property type="project" value="UniProtKB-KW"/>
</dbReference>
<dbReference type="GO" id="GO:0007095">
    <property type="term" value="P:mitotic G2 DNA damage checkpoint signaling"/>
    <property type="evidence" value="ECO:0000250"/>
    <property type="project" value="UniProtKB"/>
</dbReference>
<dbReference type="GO" id="GO:0045665">
    <property type="term" value="P:negative regulation of neuron differentiation"/>
    <property type="evidence" value="ECO:0000315"/>
    <property type="project" value="RGD"/>
</dbReference>
<dbReference type="GO" id="GO:1904354">
    <property type="term" value="P:negative regulation of telomere capping"/>
    <property type="evidence" value="ECO:0000266"/>
    <property type="project" value="RGD"/>
</dbReference>
<dbReference type="GO" id="GO:0007405">
    <property type="term" value="P:neuroblast proliferation"/>
    <property type="evidence" value="ECO:0000266"/>
    <property type="project" value="RGD"/>
</dbReference>
<dbReference type="GO" id="GO:0050885">
    <property type="term" value="P:neuromuscular process controlling balance"/>
    <property type="evidence" value="ECO:0000266"/>
    <property type="project" value="RGD"/>
</dbReference>
<dbReference type="GO" id="GO:0008284">
    <property type="term" value="P:positive regulation of cell population proliferation"/>
    <property type="evidence" value="ECO:0000315"/>
    <property type="project" value="RGD"/>
</dbReference>
<dbReference type="GO" id="GO:2000781">
    <property type="term" value="P:positive regulation of double-strand break repair"/>
    <property type="evidence" value="ECO:0000266"/>
    <property type="project" value="RGD"/>
</dbReference>
<dbReference type="GO" id="GO:0032206">
    <property type="term" value="P:positive regulation of telomere maintenance"/>
    <property type="evidence" value="ECO:0000266"/>
    <property type="project" value="RGD"/>
</dbReference>
<dbReference type="GO" id="GO:0031848">
    <property type="term" value="P:protection from non-homologous end joining at telomere"/>
    <property type="evidence" value="ECO:0000250"/>
    <property type="project" value="UniProtKB"/>
</dbReference>
<dbReference type="GO" id="GO:1990166">
    <property type="term" value="P:protein localization to site of double-strand break"/>
    <property type="evidence" value="ECO:0000250"/>
    <property type="project" value="UniProtKB"/>
</dbReference>
<dbReference type="GO" id="GO:0062176">
    <property type="term" value="P:R-loop processing"/>
    <property type="evidence" value="ECO:0000250"/>
    <property type="project" value="UniProtKB"/>
</dbReference>
<dbReference type="GO" id="GO:0048145">
    <property type="term" value="P:regulation of fibroblast proliferation"/>
    <property type="evidence" value="ECO:0000314"/>
    <property type="project" value="UniProtKB"/>
</dbReference>
<dbReference type="GO" id="GO:0009410">
    <property type="term" value="P:response to xenobiotic stimulus"/>
    <property type="evidence" value="ECO:0000270"/>
    <property type="project" value="RGD"/>
</dbReference>
<dbReference type="GO" id="GO:0090656">
    <property type="term" value="P:t-circle formation"/>
    <property type="evidence" value="ECO:0000266"/>
    <property type="project" value="RGD"/>
</dbReference>
<dbReference type="GO" id="GO:0000723">
    <property type="term" value="P:telomere maintenance"/>
    <property type="evidence" value="ECO:0000250"/>
    <property type="project" value="UniProtKB"/>
</dbReference>
<dbReference type="GO" id="GO:0043247">
    <property type="term" value="P:telomere maintenance in response to DNA damage"/>
    <property type="evidence" value="ECO:0000250"/>
    <property type="project" value="UniProtKB"/>
</dbReference>
<dbReference type="GO" id="GO:0090737">
    <property type="term" value="P:telomere maintenance via telomere trimming"/>
    <property type="evidence" value="ECO:0000266"/>
    <property type="project" value="RGD"/>
</dbReference>
<dbReference type="GO" id="GO:0031860">
    <property type="term" value="P:telomeric 3' overhang formation"/>
    <property type="evidence" value="ECO:0000266"/>
    <property type="project" value="RGD"/>
</dbReference>
<dbReference type="CDD" id="cd17741">
    <property type="entry name" value="BRCT_nibrin"/>
    <property type="match status" value="1"/>
</dbReference>
<dbReference type="CDD" id="cd22667">
    <property type="entry name" value="FHA_NBN"/>
    <property type="match status" value="1"/>
</dbReference>
<dbReference type="FunFam" id="2.60.200.20:FF:000017">
    <property type="entry name" value="Nibrin"/>
    <property type="match status" value="1"/>
</dbReference>
<dbReference type="FunFam" id="3.40.50.10190:FF:000024">
    <property type="entry name" value="Nibrin"/>
    <property type="match status" value="1"/>
</dbReference>
<dbReference type="FunFam" id="3.40.50.10980:FF:000001">
    <property type="entry name" value="Nibrin"/>
    <property type="match status" value="1"/>
</dbReference>
<dbReference type="Gene3D" id="2.60.200.20">
    <property type="match status" value="1"/>
</dbReference>
<dbReference type="Gene3D" id="3.40.50.10190">
    <property type="entry name" value="BRCT domain"/>
    <property type="match status" value="1"/>
</dbReference>
<dbReference type="Gene3D" id="3.40.50.10980">
    <property type="entry name" value="Nibrin, BRCT2 domain"/>
    <property type="match status" value="1"/>
</dbReference>
<dbReference type="InterPro" id="IPR001357">
    <property type="entry name" value="BRCT_dom"/>
</dbReference>
<dbReference type="InterPro" id="IPR036420">
    <property type="entry name" value="BRCT_dom_sf"/>
</dbReference>
<dbReference type="InterPro" id="IPR000253">
    <property type="entry name" value="FHA_dom"/>
</dbReference>
<dbReference type="InterPro" id="IPR040227">
    <property type="entry name" value="Nibrin-rel"/>
</dbReference>
<dbReference type="InterPro" id="IPR032429">
    <property type="entry name" value="Nibrin_BRCT2"/>
</dbReference>
<dbReference type="InterPro" id="IPR043014">
    <property type="entry name" value="Nibrin_BRCT2_sf"/>
</dbReference>
<dbReference type="InterPro" id="IPR013908">
    <property type="entry name" value="Nibrin_C"/>
</dbReference>
<dbReference type="InterPro" id="IPR016592">
    <property type="entry name" value="Nibrin_met"/>
</dbReference>
<dbReference type="InterPro" id="IPR008984">
    <property type="entry name" value="SMAD_FHA_dom_sf"/>
</dbReference>
<dbReference type="PANTHER" id="PTHR12162:SF0">
    <property type="entry name" value="NIBRIN"/>
    <property type="match status" value="1"/>
</dbReference>
<dbReference type="PANTHER" id="PTHR12162">
    <property type="entry name" value="NIBRIN-RELATED"/>
    <property type="match status" value="1"/>
</dbReference>
<dbReference type="Pfam" id="PF00533">
    <property type="entry name" value="BRCT"/>
    <property type="match status" value="1"/>
</dbReference>
<dbReference type="Pfam" id="PF00498">
    <property type="entry name" value="FHA"/>
    <property type="match status" value="1"/>
</dbReference>
<dbReference type="Pfam" id="PF08599">
    <property type="entry name" value="Nbs1_C"/>
    <property type="match status" value="1"/>
</dbReference>
<dbReference type="Pfam" id="PF16508">
    <property type="entry name" value="NIBRIN_BRCT_II"/>
    <property type="match status" value="1"/>
</dbReference>
<dbReference type="PIRSF" id="PIRSF011869">
    <property type="entry name" value="Nibrin_animal"/>
    <property type="match status" value="1"/>
</dbReference>
<dbReference type="SMART" id="SM00240">
    <property type="entry name" value="FHA"/>
    <property type="match status" value="1"/>
</dbReference>
<dbReference type="SMART" id="SM01348">
    <property type="entry name" value="Nbs1_C"/>
    <property type="match status" value="1"/>
</dbReference>
<dbReference type="SUPFAM" id="SSF52113">
    <property type="entry name" value="BRCT domain"/>
    <property type="match status" value="1"/>
</dbReference>
<dbReference type="SUPFAM" id="SSF49879">
    <property type="entry name" value="SMAD/FHA domain"/>
    <property type="match status" value="1"/>
</dbReference>
<dbReference type="PROSITE" id="PS50006">
    <property type="entry name" value="FHA_DOMAIN"/>
    <property type="match status" value="1"/>
</dbReference>
<comment type="function">
    <text evidence="1">Component of the MRN complex, which plays a central role in double-strand break (DSB) repair, DNA recombination, maintenance of telomere integrity and meiosis. The MRN complex is involved in the repair of DNA double-strand breaks (DSBs) via homologous recombination (HR), an error-free mechanism which primarily occurs during S and G2 phases. The complex (1) mediates the end resection of damaged DNA, which generates proper single-stranded DNA, a key initial steps in HR, and is (2) required for the recruitment of other repair factors and efficient activation of ATM and ATR upon DNA damage. The MRN complex possesses single-strand endonuclease activity and double-strand-specific 3'-5' exonuclease activity, which are provided by MRE11, to initiate end resection, which is required for single-strand invasion and recombination. Within the MRN complex, NBN acts as a protein-protein adapter, which specifically recognizes and binds phosphorylated proteins, promoting their recruitment to DNA damage sites. Recruits MRE11 and RAD50 components of the MRN complex to DSBs in response to DNA damage. Promotes the recruitment of PI3/PI4-kinase family members ATM, ATR, and probably DNA-PKcs to the DNA damage sites, activating their functions. Mediates the recruitment of phosphorylated RBBP8/CtIP to DSBs, leading to cooperation between the MRN complex and RBBP8/CtIP to initiate end resection. RBBP8/CtIP specifically promotes the endonuclease activity of the MRN complex to clear DNA ends containing protein adducts. The MRN complex is also required for the processing of R-loops. NBN also functions in telomere length maintenance via its interaction with TERF2: interaction with TERF2 during G1 phase preventing recruitment of DCLRE1B/Apollo to telomeres. NBN also promotes DNA repair choice at dysfunctional telomeres: NBN phosphorylation by CK2 promotes non-homologous end joining repair at telomeres, while unphosphorylated NBN promotes microhomology-mediated end-joining (MMEJ) repair. Enhances AKT1 phosphorylation possibly by association with the mTORC2 complex.</text>
</comment>
<comment type="subunit">
    <text evidence="1 2">Component of the MRN complex composed of two heterodimers RAD50 and MRE11 associated with a single NBN. The MRN complexes dimerize on DNA to form joined MRN-MRN oligomers required for DNA double-strand break repair. The MRN complexes dimerize on DNA to form joined MRN-MRN oligomers required for DNA double-strand break repair. As part of the MRN complex, interacts with MCM9; the interaction recruits the complex to DNA repair sites. Component of the BASC complex, at least composed of BRCA1, MSH2, MSH6, MLH1, ATM, BLM, RAD50, MRE11 and NBN. Interacts with histone H2AX; this requires phosphorylation of H2AX on 'Ser-139' and promotes NBN recruitment to DNA damage sites. Interacts with (phosphorylated) MDC1; promoting NBN recruitment to DNA damage sites. Interacts with (phosphorylated) RAD17; promoting NBN recruitment to DNA damage sites. Interacts (via FxF/Y motif) with ATM. Interacts with HJURP. Interacts with INTS3. Interacts with KPNA2. Interacts with TERF2; interaction is disrupted upon NBN phosphorylation by CDK2. Interacts with (phosphorylated) RBBP8/CtIP; the interaction links the role of the MRN complex in DNA double-strand break sensing to resection. Interacts with SP100; recruits NBN to PML bodies. Interacts with ATF2. Interacts with MTOR, MAPKAP1 isoform 2 and RICTOR; indicative for an association with the mTORC2 complex. Interacts with MRNIP. Interacts with UFL1; promoting UFL1 recruitment to double-strand breaks following DNA damage (By similarity). Interacts with CYREN (via XLF motif) (By similarity).</text>
</comment>
<comment type="subcellular location">
    <subcellularLocation>
        <location evidence="1">Nucleus</location>
    </subcellularLocation>
    <subcellularLocation>
        <location evidence="1">Chromosome</location>
    </subcellularLocation>
    <subcellularLocation>
        <location evidence="1">Nucleus</location>
        <location evidence="1">PML body</location>
    </subcellularLocation>
    <subcellularLocation>
        <location evidence="1">Chromosome</location>
        <location evidence="1">Telomere</location>
    </subcellularLocation>
    <text evidence="1">Localizes to discrete nuclear foci after treatment with genotoxic agents. Localizes to DNA double-strand breaks (DSBs); recruited to DNA damage sites via association with phosphorylated proteins, such as phosphorylated H2AX, phosphorylated MDC1 and phosphorylated RAD17. Acetylation of 'Lys-5' of histone H2AX (H2AXK5ac) promotes NBN/NBS1 assembly at the sites of DNA damage.</text>
</comment>
<comment type="tissue specificity">
    <text evidence="6">Present at approximately equal levels in the heart at fetal day 17, at relatively constant levels at postnatal days 10, 17 and 21 and at slightly lower levels in the adult heart. Barely detectable in the brain. Not detected in kidney, very low levels in liver and skeletal muscle and moderate levels in heart, lung and brain (at protein level).</text>
</comment>
<comment type="domain">
    <text evidence="1">The FHA and BRCT domains specifically recognize and bind phosphorylated proteins.</text>
</comment>
<comment type="domain">
    <text evidence="1">The C-terminal domain contains a MRE11-binding site, and this interaction is required for the nuclear localization of the MRN complex.</text>
</comment>
<comment type="domain">
    <text evidence="1">The FxF/Y motif (also named EEXXXDDL motif) is required for the interaction with ATM and its recruitment to sites of DNA damage and promote the phosphorylation of ATM substrates, leading to the events of DNA damage response.</text>
</comment>
<comment type="PTM">
    <text evidence="1">Phosphorylated by ATM in response of ionizing radiation, and such phosphorylation is responsible intra-S phase checkpoint control and telomere maintenance. Phosphorylated at Ser-433 by CDK2 in S/G2 phases abolishes interaction with TERF2, enabling DCLRE1B/Apollo recruitment to telomeres. Phosphorylation at Ser-433 in response to dysfunctional telomeres promotes non-homologous end joining repair at telomeres, while dephosphorylation by PPP1CA promotes microhomology-mediated end-joining (MMEJ) repair.</text>
</comment>
<comment type="PTM">
    <text evidence="1">Ubiquitinated at Lys-436 via 'Lys-6'-linked ubiquitin chains by RNF8, promoting NBN recruitment to DNA double-strand breaks (DSBs). Ubiquitinated at Lys-687 via 'Lys-63'-linked ubiquitin chains by PELI1: ubiquitination takes place following PELI1 phosphorylation and promotes ATM activation and DNA repair. Ubiquitinated at Lys-732 via 'Lys-63'-linked ubiquitin chains by the SCF(SKP2) complex: ubiquitination takes place following SKP2 phosphorylation and promotes ATM activation and DNA repair.</text>
</comment>
<comment type="similarity">
    <text evidence="7">Belongs to the Nibrin family.</text>
</comment>
<reference key="1">
    <citation type="journal article" date="2000" name="Nucleic Acids Res.">
        <title>The MRE11-NBS1-RAD50 pathway is perturbed in SV40 large T antigen-immortalized AT-1, AT-2 and HL-1 cardiomyocytes.</title>
        <authorList>
            <person name="Lanson N.A. Jr."/>
            <person name="Egeland D.B."/>
            <person name="Royals B.A."/>
            <person name="Claycomb W.C."/>
        </authorList>
    </citation>
    <scope>NUCLEOTIDE SEQUENCE [MRNA]</scope>
    <scope>TISSUE SPECIFICITY</scope>
</reference>
<reference key="2">
    <citation type="journal article" date="2004" name="Genome Res.">
        <title>The status, quality, and expansion of the NIH full-length cDNA project: the Mammalian Gene Collection (MGC).</title>
        <authorList>
            <consortium name="The MGC Project Team"/>
        </authorList>
    </citation>
    <scope>NUCLEOTIDE SEQUENCE [LARGE SCALE MRNA]</scope>
    <source>
        <tissue>Testis</tissue>
    </source>
</reference>
<reference key="3">
    <citation type="journal article" date="2012" name="Nat. Commun.">
        <title>Quantitative maps of protein phosphorylation sites across 14 different rat organs and tissues.</title>
        <authorList>
            <person name="Lundby A."/>
            <person name="Secher A."/>
            <person name="Lage K."/>
            <person name="Nordsborg N.B."/>
            <person name="Dmytriyev A."/>
            <person name="Lundby C."/>
            <person name="Olsen J.V."/>
        </authorList>
    </citation>
    <scope>PHOSPHORYLATION [LARGE SCALE ANALYSIS] AT SER-433</scope>
    <scope>IDENTIFICATION BY MASS SPECTROMETRY [LARGE SCALE ANALYSIS]</scope>
</reference>
<proteinExistence type="evidence at protein level"/>
<feature type="chain" id="PRO_0000231046" description="Nibrin">
    <location>
        <begin position="1"/>
        <end position="750"/>
    </location>
</feature>
<feature type="domain" description="FHA" evidence="4">
    <location>
        <begin position="24"/>
        <end position="83"/>
    </location>
</feature>
<feature type="domain" description="BRCT 1" evidence="3">
    <location>
        <begin position="105"/>
        <end position="181"/>
    </location>
</feature>
<feature type="domain" description="BRCT 2" evidence="1">
    <location>
        <begin position="224"/>
        <end position="315"/>
    </location>
</feature>
<feature type="region of interest" description="Mediates interaction with SP100" evidence="2">
    <location>
        <begin position="111"/>
        <end position="328"/>
    </location>
</feature>
<feature type="region of interest" description="Interaction with MTOR, MAPKAP1 and RICTOR" evidence="1">
    <location>
        <begin position="221"/>
        <end position="403"/>
    </location>
</feature>
<feature type="region of interest" description="Disordered" evidence="5">
    <location>
        <begin position="429"/>
        <end position="479"/>
    </location>
</feature>
<feature type="region of interest" description="Disordered" evidence="5">
    <location>
        <begin position="494"/>
        <end position="550"/>
    </location>
</feature>
<feature type="region of interest" description="Disordered" evidence="5">
    <location>
        <begin position="581"/>
        <end position="622"/>
    </location>
</feature>
<feature type="short sequence motif" description="Nuclear localization signal" evidence="1">
    <location>
        <begin position="461"/>
        <end position="467"/>
    </location>
</feature>
<feature type="short sequence motif" description="FxF/Y motif" evidence="1">
    <location>
        <begin position="737"/>
        <end position="746"/>
    </location>
</feature>
<feature type="compositionally biased region" description="Polar residues" evidence="5">
    <location>
        <begin position="446"/>
        <end position="457"/>
    </location>
</feature>
<feature type="compositionally biased region" description="Basic and acidic residues" evidence="5">
    <location>
        <begin position="502"/>
        <end position="514"/>
    </location>
</feature>
<feature type="compositionally biased region" description="Basic and acidic residues" evidence="5">
    <location>
        <begin position="540"/>
        <end position="550"/>
    </location>
</feature>
<feature type="compositionally biased region" description="Basic and acidic residues" evidence="5">
    <location>
        <begin position="581"/>
        <end position="599"/>
    </location>
</feature>
<feature type="modified residue" description="Phosphothreonine" evidence="1">
    <location>
        <position position="337"/>
    </location>
</feature>
<feature type="modified residue" description="Phosphoserine; by ATM" evidence="1">
    <location>
        <position position="343"/>
    </location>
</feature>
<feature type="modified residue" description="Phosphoserine" evidence="1">
    <location>
        <position position="347"/>
    </location>
</feature>
<feature type="modified residue" description="Phosphoserine" evidence="8">
    <location>
        <position position="433"/>
    </location>
</feature>
<feature type="modified residue" description="Phosphoserine" evidence="1">
    <location>
        <position position="508"/>
    </location>
</feature>
<feature type="modified residue" description="Phosphoserine" evidence="1">
    <location>
        <position position="517"/>
    </location>
</feature>
<feature type="cross-link" description="Glycyl lysine isopeptide (Lys-Gly) (interchain with G-Cter in ubiquitin)" evidence="1">
    <location>
        <position position="436"/>
    </location>
</feature>
<feature type="cross-link" description="Glycyl lysine isopeptide (Lys-Gly) (interchain with G-Cter in SUMO2)" evidence="1">
    <location>
        <position position="528"/>
    </location>
</feature>
<feature type="cross-link" description="Glycyl lysine isopeptide (Lys-Gly) (interchain with G-Cter in SUMO2)" evidence="1">
    <location>
        <position position="569"/>
    </location>
</feature>
<feature type="cross-link" description="Glycyl lysine isopeptide (Lys-Gly) (interchain with G-Cter in SUMO2)" evidence="1">
    <location>
        <position position="580"/>
    </location>
</feature>
<feature type="cross-link" description="Glycyl lysine isopeptide (Lys-Gly) (interchain with G-Cter in ubiquitin)" evidence="1">
    <location>
        <position position="683"/>
    </location>
</feature>
<feature type="cross-link" description="Glycyl lysine isopeptide (Lys-Gly) (interchain with G-Cter in ubiquitin)" evidence="1">
    <location>
        <position position="687"/>
    </location>
</feature>
<feature type="cross-link" description="Glycyl lysine isopeptide (Lys-Gly) (interchain with G-Cter in ubiquitin)" evidence="1">
    <location>
        <position position="732"/>
    </location>
</feature>
<feature type="sequence conflict" description="In Ref. 1; AAF91228." evidence="7" ref="1">
    <original>T</original>
    <variation>I</variation>
    <location>
        <position position="67"/>
    </location>
</feature>
<feature type="sequence conflict" description="In Ref. 2; AAH85700." evidence="7" ref="2">
    <original>Q</original>
    <variation>L</variation>
    <location>
        <position position="84"/>
    </location>
</feature>
<feature type="sequence conflict" description="In Ref. 2; AAH85700." evidence="7" ref="2">
    <original>N</original>
    <variation>H</variation>
    <location>
        <position position="277"/>
    </location>
</feature>
<feature type="sequence conflict" description="In Ref. 1; AAF91228." evidence="7" ref="1">
    <original>G</original>
    <variation>D</variation>
    <location>
        <position position="301"/>
    </location>
</feature>
<feature type="sequence conflict" description="In Ref. 1; AAF91228." evidence="7" ref="1">
    <original>G</original>
    <variation>E</variation>
    <location>
        <position position="497"/>
    </location>
</feature>
<feature type="sequence conflict" description="In Ref. 1; AAF91228." evidence="7" ref="1">
    <original>D</original>
    <variation>G</variation>
    <location>
        <position position="514"/>
    </location>
</feature>
<feature type="sequence conflict" description="In Ref. 1; AAF91228." evidence="7" ref="1">
    <original>G</original>
    <variation>E</variation>
    <location>
        <position position="619"/>
    </location>
</feature>
<feature type="sequence conflict" description="In Ref. 2; AAH85700." evidence="7" ref="2">
    <original>Q</original>
    <variation>P</variation>
    <location>
        <position position="642"/>
    </location>
</feature>
<feature type="sequence conflict" description="In Ref. 1; AAF91228." evidence="7" ref="1">
    <original>V</original>
    <variation>P</variation>
    <location>
        <position position="672"/>
    </location>
</feature>
<name>NBN_RAT</name>
<protein>
    <recommendedName>
        <fullName>Nibrin</fullName>
    </recommendedName>
    <alternativeName>
        <fullName>Nijmegen breakage syndrome protein 1 homolog</fullName>
    </alternativeName>
</protein>
<organism>
    <name type="scientific">Rattus norvegicus</name>
    <name type="common">Rat</name>
    <dbReference type="NCBI Taxonomy" id="10116"/>
    <lineage>
        <taxon>Eukaryota</taxon>
        <taxon>Metazoa</taxon>
        <taxon>Chordata</taxon>
        <taxon>Craniata</taxon>
        <taxon>Vertebrata</taxon>
        <taxon>Euteleostomi</taxon>
        <taxon>Mammalia</taxon>
        <taxon>Eutheria</taxon>
        <taxon>Euarchontoglires</taxon>
        <taxon>Glires</taxon>
        <taxon>Rodentia</taxon>
        <taxon>Myomorpha</taxon>
        <taxon>Muroidea</taxon>
        <taxon>Muridae</taxon>
        <taxon>Murinae</taxon>
        <taxon>Rattus</taxon>
    </lineage>
</organism>
<gene>
    <name type="primary">Nbn</name>
    <name type="synonym">Nbs1</name>
</gene>
<accession>Q9JIL9</accession>
<accession>Q5RKL2</accession>
<keyword id="KW-0131">Cell cycle</keyword>
<keyword id="KW-0158">Chromosome</keyword>
<keyword id="KW-0227">DNA damage</keyword>
<keyword id="KW-0234">DNA repair</keyword>
<keyword id="KW-1017">Isopeptide bond</keyword>
<keyword id="KW-0469">Meiosis</keyword>
<keyword id="KW-0539">Nucleus</keyword>
<keyword id="KW-0597">Phosphoprotein</keyword>
<keyword id="KW-1185">Reference proteome</keyword>
<keyword id="KW-0779">Telomere</keyword>
<keyword id="KW-0832">Ubl conjugation</keyword>
<evidence type="ECO:0000250" key="1">
    <source>
        <dbReference type="UniProtKB" id="O60934"/>
    </source>
</evidence>
<evidence type="ECO:0000250" key="2">
    <source>
        <dbReference type="UniProtKB" id="Q9R207"/>
    </source>
</evidence>
<evidence type="ECO:0000255" key="3"/>
<evidence type="ECO:0000255" key="4">
    <source>
        <dbReference type="PROSITE-ProRule" id="PRU00086"/>
    </source>
</evidence>
<evidence type="ECO:0000256" key="5">
    <source>
        <dbReference type="SAM" id="MobiDB-lite"/>
    </source>
</evidence>
<evidence type="ECO:0000269" key="6">
    <source>
    </source>
</evidence>
<evidence type="ECO:0000305" key="7"/>
<evidence type="ECO:0007744" key="8">
    <source>
    </source>
</evidence>
<sequence>MWKLLPAASAAPGEPCRLLAGVEYIVGRKNCAILIENDQSISRNHAVLRVNFPVTSLSQTDEIPTLTIKDNSKYGTFINEEKMQNGLSSTLKTGDRVTFGVFESKFRVEYEPLVVCSSCLDVSGKTVLNQAILQLGGLTANSWTEECTHLAMSSVKVTIKTICALICGRPIVKPEYFSEFLKAVESKTQPPEIESFYPPIDEPAIGNKSVDLSGRRERKQIFKGKTFVFLNAKQHKKLGSAVVFGGGEARLMAEGGEEEQSFFSAPGTCVVDVGITNTQLIITDSQRKWIHLIMDILQRHGLRPIPEAEIGLAVIFMTTESYCNPQGQPCTEVKTTTPGPSLSQGLSANGKVIPSAPMNMTTYVADTESEPADTCMSLSERPEEVKIFGLDQNSRKLLQGTCNIKETSNQSSNSNNAASNTLVRGKAPNYQLSPMKCPAASKNKDWSSQQQLNSIKNYFQPCSRKRERDEENPEQSSCKSSRVELSCSLLEQTQPAGPSLWKSKDHESQSETLDRASNASSVGGIDIKPNGKSPDSKSFSTEDLRARKRKEVDLSTEEEVLEELLRSTKPELAVQVKVEKQEADVSIRKKPRMDAERNQHLNGGPVPESNSALQEDETGKKDELQIEAWSTKREVSNTDELQDSSEELPRKLLLTEFRSLVVHNNSSRNLCVLNGRGELKNFKKFKKATCPGAGKLPHIIGGSDLIGHHARKNTELEEWLKHEMEVQKQQAKEDSLADDLFRYNPNVKRR</sequence>